<dbReference type="EC" id="4.2.1.33" evidence="1"/>
<dbReference type="EMBL" id="AM039952">
    <property type="protein sequence ID" value="CAJ25316.1"/>
    <property type="molecule type" value="Genomic_DNA"/>
</dbReference>
<dbReference type="RefSeq" id="WP_007967735.1">
    <property type="nucleotide sequence ID" value="NZ_CP017190.1"/>
</dbReference>
<dbReference type="SMR" id="Q3BPJ7"/>
<dbReference type="STRING" id="456327.BJD11_04790"/>
<dbReference type="GeneID" id="93992566"/>
<dbReference type="KEGG" id="xcv:XCV3585"/>
<dbReference type="eggNOG" id="COG0066">
    <property type="taxonomic scope" value="Bacteria"/>
</dbReference>
<dbReference type="HOGENOM" id="CLU_081378_0_3_6"/>
<dbReference type="UniPathway" id="UPA00048">
    <property type="reaction ID" value="UER00071"/>
</dbReference>
<dbReference type="Proteomes" id="UP000007069">
    <property type="component" value="Chromosome"/>
</dbReference>
<dbReference type="GO" id="GO:0009316">
    <property type="term" value="C:3-isopropylmalate dehydratase complex"/>
    <property type="evidence" value="ECO:0007669"/>
    <property type="project" value="InterPro"/>
</dbReference>
<dbReference type="GO" id="GO:0003861">
    <property type="term" value="F:3-isopropylmalate dehydratase activity"/>
    <property type="evidence" value="ECO:0007669"/>
    <property type="project" value="UniProtKB-UniRule"/>
</dbReference>
<dbReference type="GO" id="GO:0009098">
    <property type="term" value="P:L-leucine biosynthetic process"/>
    <property type="evidence" value="ECO:0007669"/>
    <property type="project" value="UniProtKB-UniRule"/>
</dbReference>
<dbReference type="CDD" id="cd01577">
    <property type="entry name" value="IPMI_Swivel"/>
    <property type="match status" value="1"/>
</dbReference>
<dbReference type="FunFam" id="3.20.19.10:FF:000003">
    <property type="entry name" value="3-isopropylmalate dehydratase small subunit"/>
    <property type="match status" value="1"/>
</dbReference>
<dbReference type="Gene3D" id="3.20.19.10">
    <property type="entry name" value="Aconitase, domain 4"/>
    <property type="match status" value="1"/>
</dbReference>
<dbReference type="HAMAP" id="MF_01031">
    <property type="entry name" value="LeuD_type1"/>
    <property type="match status" value="1"/>
</dbReference>
<dbReference type="InterPro" id="IPR004431">
    <property type="entry name" value="3-IsopropMal_deHydase_ssu"/>
</dbReference>
<dbReference type="InterPro" id="IPR015928">
    <property type="entry name" value="Aconitase/3IPM_dehydase_swvl"/>
</dbReference>
<dbReference type="InterPro" id="IPR000573">
    <property type="entry name" value="AconitaseA/IPMdHydase_ssu_swvl"/>
</dbReference>
<dbReference type="InterPro" id="IPR033940">
    <property type="entry name" value="IPMI_Swivel"/>
</dbReference>
<dbReference type="InterPro" id="IPR050075">
    <property type="entry name" value="LeuD"/>
</dbReference>
<dbReference type="NCBIfam" id="TIGR00171">
    <property type="entry name" value="leuD"/>
    <property type="match status" value="1"/>
</dbReference>
<dbReference type="NCBIfam" id="NF002458">
    <property type="entry name" value="PRK01641.1"/>
    <property type="match status" value="1"/>
</dbReference>
<dbReference type="PANTHER" id="PTHR43345:SF5">
    <property type="entry name" value="3-ISOPROPYLMALATE DEHYDRATASE SMALL SUBUNIT"/>
    <property type="match status" value="1"/>
</dbReference>
<dbReference type="PANTHER" id="PTHR43345">
    <property type="entry name" value="3-ISOPROPYLMALATE DEHYDRATASE SMALL SUBUNIT 2-RELATED-RELATED"/>
    <property type="match status" value="1"/>
</dbReference>
<dbReference type="Pfam" id="PF00694">
    <property type="entry name" value="Aconitase_C"/>
    <property type="match status" value="1"/>
</dbReference>
<dbReference type="SUPFAM" id="SSF52016">
    <property type="entry name" value="LeuD/IlvD-like"/>
    <property type="match status" value="1"/>
</dbReference>
<organism>
    <name type="scientific">Xanthomonas euvesicatoria pv. vesicatoria (strain 85-10)</name>
    <name type="common">Xanthomonas campestris pv. vesicatoria</name>
    <dbReference type="NCBI Taxonomy" id="316273"/>
    <lineage>
        <taxon>Bacteria</taxon>
        <taxon>Pseudomonadati</taxon>
        <taxon>Pseudomonadota</taxon>
        <taxon>Gammaproteobacteria</taxon>
        <taxon>Lysobacterales</taxon>
        <taxon>Lysobacteraceae</taxon>
        <taxon>Xanthomonas</taxon>
    </lineage>
</organism>
<accession>Q3BPJ7</accession>
<proteinExistence type="inferred from homology"/>
<keyword id="KW-0028">Amino-acid biosynthesis</keyword>
<keyword id="KW-0100">Branched-chain amino acid biosynthesis</keyword>
<keyword id="KW-0432">Leucine biosynthesis</keyword>
<keyword id="KW-0456">Lyase</keyword>
<gene>
    <name evidence="1" type="primary">leuD</name>
    <name type="ordered locus">XCV3585</name>
</gene>
<comment type="function">
    <text evidence="1">Catalyzes the isomerization between 2-isopropylmalate and 3-isopropylmalate, via the formation of 2-isopropylmaleate.</text>
</comment>
<comment type="catalytic activity">
    <reaction evidence="1">
        <text>(2R,3S)-3-isopropylmalate = (2S)-2-isopropylmalate</text>
        <dbReference type="Rhea" id="RHEA:32287"/>
        <dbReference type="ChEBI" id="CHEBI:1178"/>
        <dbReference type="ChEBI" id="CHEBI:35121"/>
        <dbReference type="EC" id="4.2.1.33"/>
    </reaction>
</comment>
<comment type="pathway">
    <text evidence="1">Amino-acid biosynthesis; L-leucine biosynthesis; L-leucine from 3-methyl-2-oxobutanoate: step 2/4.</text>
</comment>
<comment type="subunit">
    <text evidence="1">Heterodimer of LeuC and LeuD.</text>
</comment>
<comment type="similarity">
    <text evidence="1">Belongs to the LeuD family. LeuD type 1 subfamily.</text>
</comment>
<protein>
    <recommendedName>
        <fullName evidence="1">3-isopropylmalate dehydratase small subunit</fullName>
        <ecNumber evidence="1">4.2.1.33</ecNumber>
    </recommendedName>
    <alternativeName>
        <fullName evidence="1">Alpha-IPM isomerase</fullName>
        <shortName evidence="1">IPMI</shortName>
    </alternativeName>
    <alternativeName>
        <fullName evidence="1">Isopropylmalate isomerase</fullName>
    </alternativeName>
</protein>
<evidence type="ECO:0000255" key="1">
    <source>
        <dbReference type="HAMAP-Rule" id="MF_01031"/>
    </source>
</evidence>
<sequence length="215" mass="24194">MTPFTQHTGLVAPLDRANVDTDQIIPKQFLKSIKRTGFGPNLFDEWRYLDIGEPGRDNSTRPLNPEFVLNFPRYQGASVLLARENFGCGSSREHAPWALDEYGFRTVIAPSFADIFYNNSFKNGLLPIVLAEAQVDALFEQCLATEGYQLTVDLAAQRVRRPDGVEYGFDIDAFRKHCLLNGLDDIGLTLQDADAIGRFEQGHRARQPWLFGALQ</sequence>
<feature type="chain" id="PRO_0000141913" description="3-isopropylmalate dehydratase small subunit">
    <location>
        <begin position="1"/>
        <end position="215"/>
    </location>
</feature>
<reference key="1">
    <citation type="journal article" date="2005" name="J. Bacteriol.">
        <title>Insights into genome plasticity and pathogenicity of the plant pathogenic Bacterium Xanthomonas campestris pv. vesicatoria revealed by the complete genome sequence.</title>
        <authorList>
            <person name="Thieme F."/>
            <person name="Koebnik R."/>
            <person name="Bekel T."/>
            <person name="Berger C."/>
            <person name="Boch J."/>
            <person name="Buettner D."/>
            <person name="Caldana C."/>
            <person name="Gaigalat L."/>
            <person name="Goesmann A."/>
            <person name="Kay S."/>
            <person name="Kirchner O."/>
            <person name="Lanz C."/>
            <person name="Linke B."/>
            <person name="McHardy A.C."/>
            <person name="Meyer F."/>
            <person name="Mittenhuber G."/>
            <person name="Nies D.H."/>
            <person name="Niesbach-Kloesgen U."/>
            <person name="Patschkowski T."/>
            <person name="Rueckert C."/>
            <person name="Rupp O."/>
            <person name="Schneiker S."/>
            <person name="Schuster S.C."/>
            <person name="Vorhoelter F.J."/>
            <person name="Weber E."/>
            <person name="Puehler A."/>
            <person name="Bonas U."/>
            <person name="Bartels D."/>
            <person name="Kaiser O."/>
        </authorList>
    </citation>
    <scope>NUCLEOTIDE SEQUENCE [LARGE SCALE GENOMIC DNA]</scope>
    <source>
        <strain>85-10</strain>
    </source>
</reference>
<name>LEUD_XANE5</name>